<reference key="1">
    <citation type="journal article" date="2006" name="PLoS Genet.">
        <title>Comparative genomics of emerging human ehrlichiosis agents.</title>
        <authorList>
            <person name="Dunning Hotopp J.C."/>
            <person name="Lin M."/>
            <person name="Madupu R."/>
            <person name="Crabtree J."/>
            <person name="Angiuoli S.V."/>
            <person name="Eisen J.A."/>
            <person name="Seshadri R."/>
            <person name="Ren Q."/>
            <person name="Wu M."/>
            <person name="Utterback T.R."/>
            <person name="Smith S."/>
            <person name="Lewis M."/>
            <person name="Khouri H."/>
            <person name="Zhang C."/>
            <person name="Niu H."/>
            <person name="Lin Q."/>
            <person name="Ohashi N."/>
            <person name="Zhi N."/>
            <person name="Nelson W.C."/>
            <person name="Brinkac L.M."/>
            <person name="Dodson R.J."/>
            <person name="Rosovitz M.J."/>
            <person name="Sundaram J.P."/>
            <person name="Daugherty S.C."/>
            <person name="Davidsen T."/>
            <person name="Durkin A.S."/>
            <person name="Gwinn M.L."/>
            <person name="Haft D.H."/>
            <person name="Selengut J.D."/>
            <person name="Sullivan S.A."/>
            <person name="Zafar N."/>
            <person name="Zhou L."/>
            <person name="Benahmed F."/>
            <person name="Forberger H."/>
            <person name="Halpin R."/>
            <person name="Mulligan S."/>
            <person name="Robinson J."/>
            <person name="White O."/>
            <person name="Rikihisa Y."/>
            <person name="Tettelin H."/>
        </authorList>
    </citation>
    <scope>NUCLEOTIDE SEQUENCE [LARGE SCALE GENOMIC DNA]</scope>
    <source>
        <strain>HZ</strain>
    </source>
</reference>
<protein>
    <recommendedName>
        <fullName evidence="1">Large ribosomal subunit protein bL20</fullName>
    </recommendedName>
    <alternativeName>
        <fullName evidence="2">50S ribosomal protein L20</fullName>
    </alternativeName>
</protein>
<proteinExistence type="inferred from homology"/>
<name>RL20_ANAPZ</name>
<sequence>MARVKRGVTTRARHKKVIALAKGYRGRSKNCYRAALQRLEKALAYAYRDRRARKRDFRSLWIVRINAAAGLYGLRYSEFMHGVSLCSIGLNRKMLAEMAVRDKGAFEKIAHAAAQACGRTCVVAQSNS</sequence>
<organism>
    <name type="scientific">Anaplasma phagocytophilum (strain HZ)</name>
    <dbReference type="NCBI Taxonomy" id="212042"/>
    <lineage>
        <taxon>Bacteria</taxon>
        <taxon>Pseudomonadati</taxon>
        <taxon>Pseudomonadota</taxon>
        <taxon>Alphaproteobacteria</taxon>
        <taxon>Rickettsiales</taxon>
        <taxon>Anaplasmataceae</taxon>
        <taxon>Anaplasma</taxon>
        <taxon>phagocytophilum group</taxon>
    </lineage>
</organism>
<accession>Q2GLQ8</accession>
<evidence type="ECO:0000255" key="1">
    <source>
        <dbReference type="HAMAP-Rule" id="MF_00382"/>
    </source>
</evidence>
<evidence type="ECO:0000305" key="2"/>
<dbReference type="EMBL" id="CP000235">
    <property type="protein sequence ID" value="ABD43283.1"/>
    <property type="molecule type" value="Genomic_DNA"/>
</dbReference>
<dbReference type="RefSeq" id="WP_011450219.1">
    <property type="nucleotide sequence ID" value="NC_007797.1"/>
</dbReference>
<dbReference type="SMR" id="Q2GLQ8"/>
<dbReference type="STRING" id="212042.APH_0060"/>
<dbReference type="PaxDb" id="212042-APH_0060"/>
<dbReference type="EnsemblBacteria" id="ABD43283">
    <property type="protein sequence ID" value="ABD43283"/>
    <property type="gene ID" value="APH_0060"/>
</dbReference>
<dbReference type="KEGG" id="aph:APH_0060"/>
<dbReference type="eggNOG" id="COG0292">
    <property type="taxonomic scope" value="Bacteria"/>
</dbReference>
<dbReference type="HOGENOM" id="CLU_123265_0_1_5"/>
<dbReference type="Proteomes" id="UP000001943">
    <property type="component" value="Chromosome"/>
</dbReference>
<dbReference type="GO" id="GO:1990904">
    <property type="term" value="C:ribonucleoprotein complex"/>
    <property type="evidence" value="ECO:0007669"/>
    <property type="project" value="UniProtKB-KW"/>
</dbReference>
<dbReference type="GO" id="GO:0005840">
    <property type="term" value="C:ribosome"/>
    <property type="evidence" value="ECO:0007669"/>
    <property type="project" value="UniProtKB-KW"/>
</dbReference>
<dbReference type="GO" id="GO:0019843">
    <property type="term" value="F:rRNA binding"/>
    <property type="evidence" value="ECO:0007669"/>
    <property type="project" value="UniProtKB-UniRule"/>
</dbReference>
<dbReference type="GO" id="GO:0003735">
    <property type="term" value="F:structural constituent of ribosome"/>
    <property type="evidence" value="ECO:0007669"/>
    <property type="project" value="InterPro"/>
</dbReference>
<dbReference type="GO" id="GO:0000027">
    <property type="term" value="P:ribosomal large subunit assembly"/>
    <property type="evidence" value="ECO:0007669"/>
    <property type="project" value="UniProtKB-UniRule"/>
</dbReference>
<dbReference type="GO" id="GO:0006412">
    <property type="term" value="P:translation"/>
    <property type="evidence" value="ECO:0007669"/>
    <property type="project" value="InterPro"/>
</dbReference>
<dbReference type="CDD" id="cd07026">
    <property type="entry name" value="Ribosomal_L20"/>
    <property type="match status" value="1"/>
</dbReference>
<dbReference type="FunFam" id="1.10.1900.20:FF:000001">
    <property type="entry name" value="50S ribosomal protein L20"/>
    <property type="match status" value="1"/>
</dbReference>
<dbReference type="Gene3D" id="6.10.160.10">
    <property type="match status" value="1"/>
</dbReference>
<dbReference type="Gene3D" id="1.10.1900.20">
    <property type="entry name" value="Ribosomal protein L20"/>
    <property type="match status" value="1"/>
</dbReference>
<dbReference type="HAMAP" id="MF_00382">
    <property type="entry name" value="Ribosomal_bL20"/>
    <property type="match status" value="1"/>
</dbReference>
<dbReference type="InterPro" id="IPR005813">
    <property type="entry name" value="Ribosomal_bL20"/>
</dbReference>
<dbReference type="InterPro" id="IPR049946">
    <property type="entry name" value="RIBOSOMAL_L20_CS"/>
</dbReference>
<dbReference type="InterPro" id="IPR035566">
    <property type="entry name" value="Ribosomal_protein_bL20_C"/>
</dbReference>
<dbReference type="NCBIfam" id="TIGR01032">
    <property type="entry name" value="rplT_bact"/>
    <property type="match status" value="1"/>
</dbReference>
<dbReference type="PANTHER" id="PTHR10986">
    <property type="entry name" value="39S RIBOSOMAL PROTEIN L20"/>
    <property type="match status" value="1"/>
</dbReference>
<dbReference type="Pfam" id="PF00453">
    <property type="entry name" value="Ribosomal_L20"/>
    <property type="match status" value="1"/>
</dbReference>
<dbReference type="PRINTS" id="PR00062">
    <property type="entry name" value="RIBOSOMALL20"/>
</dbReference>
<dbReference type="SUPFAM" id="SSF74731">
    <property type="entry name" value="Ribosomal protein L20"/>
    <property type="match status" value="1"/>
</dbReference>
<dbReference type="PROSITE" id="PS00937">
    <property type="entry name" value="RIBOSOMAL_L20"/>
    <property type="match status" value="1"/>
</dbReference>
<gene>
    <name evidence="1" type="primary">rplT</name>
    <name type="ordered locus">APH_0060</name>
</gene>
<comment type="function">
    <text evidence="1">Binds directly to 23S ribosomal RNA and is necessary for the in vitro assembly process of the 50S ribosomal subunit. It is not involved in the protein synthesizing functions of that subunit.</text>
</comment>
<comment type="similarity">
    <text evidence="1">Belongs to the bacterial ribosomal protein bL20 family.</text>
</comment>
<keyword id="KW-0687">Ribonucleoprotein</keyword>
<keyword id="KW-0689">Ribosomal protein</keyword>
<keyword id="KW-0694">RNA-binding</keyword>
<keyword id="KW-0699">rRNA-binding</keyword>
<feature type="chain" id="PRO_0000243653" description="Large ribosomal subunit protein bL20">
    <location>
        <begin position="1"/>
        <end position="128"/>
    </location>
</feature>